<comment type="function">
    <text evidence="2 3">DNA-dependent RNA polymerase catalyzes the transcription of DNA into RNA using the four ribonucleoside triphosphates as substrates. Component of RNA polymerases IV and V which mediate short-interfering RNAs (siRNA) accumulation and subsequent RNA-directed DNA methylation-dependent (RdDM) transcriptional gene silencing (TGS) of endogenous repeated sequences, including transposable elements. Required for the de novo DNA methylation directed by the RdDM pathway.</text>
</comment>
<comment type="subunit">
    <text evidence="2 3 4">Component of the RNA polymerase IV and V complexes. Interacts with NRPD1 and NRPE1.</text>
</comment>
<comment type="subcellular location">
    <subcellularLocation>
        <location evidence="3">Nucleus</location>
    </subcellularLocation>
    <text>Detected as small foci dispersed throughout the nucleoplasm.</text>
</comment>
<comment type="tissue specificity">
    <text evidence="3">Expressed in shoot meristematic region and in root tips. Detected in cotyledons, flowers and young leaves.</text>
</comment>
<comment type="disruption phenotype">
    <text evidence="3">No developmental phenotype, but reduced DNA methylation at RdDM target loci.</text>
</comment>
<comment type="similarity">
    <text evidence="5">Belongs to the eukaryotic RPB4 RNA polymerase subunit family.</text>
</comment>
<comment type="sequence caution" evidence="5">
    <conflict type="erroneous gene model prediction">
        <sequence resource="EMBL-CDS" id="CAB46033"/>
    </conflict>
</comment>
<comment type="sequence caution" evidence="5">
    <conflict type="erroneous gene model prediction">
        <sequence resource="EMBL-CDS" id="CAB78637"/>
    </conflict>
</comment>
<sequence>MSEKGGKGLKSSLKSKDGGKDGSSTKLKKGRKIHFDQRTPPANYKILNVSSDQQPFQSSAAKCGKSDKPTKSSKNSLHSFELKDLPENAECMMDCEAFQILDGIKGQLVGLSEDPSIKIPVSYDRALAYVESCVHYTNPQSVRKVLEPLKTYGISDGEMCVIANASSESVDEVLAFIPSLKTKKEVINQPLQDALEELSKLKKSE</sequence>
<accession>Q6DBA5</accession>
<accession>F4JKY1</accession>
<accession>Q9SUL2</accession>
<name>NRPD4_ARATH</name>
<reference key="1">
    <citation type="journal article" date="1998" name="Nature">
        <title>Analysis of 1.9 Mb of contiguous sequence from chromosome 4 of Arabidopsis thaliana.</title>
        <authorList>
            <person name="Bevan M."/>
            <person name="Bancroft I."/>
            <person name="Bent E."/>
            <person name="Love K."/>
            <person name="Goodman H.M."/>
            <person name="Dean C."/>
            <person name="Bergkamp R."/>
            <person name="Dirkse W."/>
            <person name="van Staveren M."/>
            <person name="Stiekema W."/>
            <person name="Drost L."/>
            <person name="Ridley P."/>
            <person name="Hudson S.-A."/>
            <person name="Patel K."/>
            <person name="Murphy G."/>
            <person name="Piffanelli P."/>
            <person name="Wedler H."/>
            <person name="Wedler E."/>
            <person name="Wambutt R."/>
            <person name="Weitzenegger T."/>
            <person name="Pohl T."/>
            <person name="Terryn N."/>
            <person name="Gielen J."/>
            <person name="Villarroel R."/>
            <person name="De Clercq R."/>
            <person name="van Montagu M."/>
            <person name="Lecharny A."/>
            <person name="Aubourg S."/>
            <person name="Gy I."/>
            <person name="Kreis M."/>
            <person name="Lao N."/>
            <person name="Kavanagh T."/>
            <person name="Hempel S."/>
            <person name="Kotter P."/>
            <person name="Entian K.-D."/>
            <person name="Rieger M."/>
            <person name="Schaefer M."/>
            <person name="Funk B."/>
            <person name="Mueller-Auer S."/>
            <person name="Silvey M."/>
            <person name="James R."/>
            <person name="Monfort A."/>
            <person name="Pons A."/>
            <person name="Puigdomenech P."/>
            <person name="Douka A."/>
            <person name="Voukelatou E."/>
            <person name="Milioni D."/>
            <person name="Hatzopoulos P."/>
            <person name="Piravandi E."/>
            <person name="Obermaier B."/>
            <person name="Hilbert H."/>
            <person name="Duesterhoeft A."/>
            <person name="Moores T."/>
            <person name="Jones J.D.G."/>
            <person name="Eneva T."/>
            <person name="Palme K."/>
            <person name="Benes V."/>
            <person name="Rechmann S."/>
            <person name="Ansorge W."/>
            <person name="Cooke R."/>
            <person name="Berger C."/>
            <person name="Delseny M."/>
            <person name="Voet M."/>
            <person name="Volckaert G."/>
            <person name="Mewes H.-W."/>
            <person name="Klosterman S."/>
            <person name="Schueller C."/>
            <person name="Chalwatzis N."/>
        </authorList>
    </citation>
    <scope>NUCLEOTIDE SEQUENCE [LARGE SCALE GENOMIC DNA]</scope>
    <source>
        <strain>cv. Columbia</strain>
    </source>
</reference>
<reference key="2">
    <citation type="journal article" date="1999" name="Nature">
        <title>Sequence and analysis of chromosome 4 of the plant Arabidopsis thaliana.</title>
        <authorList>
            <person name="Mayer K.F.X."/>
            <person name="Schueller C."/>
            <person name="Wambutt R."/>
            <person name="Murphy G."/>
            <person name="Volckaert G."/>
            <person name="Pohl T."/>
            <person name="Duesterhoeft A."/>
            <person name="Stiekema W."/>
            <person name="Entian K.-D."/>
            <person name="Terryn N."/>
            <person name="Harris B."/>
            <person name="Ansorge W."/>
            <person name="Brandt P."/>
            <person name="Grivell L.A."/>
            <person name="Rieger M."/>
            <person name="Weichselgartner M."/>
            <person name="de Simone V."/>
            <person name="Obermaier B."/>
            <person name="Mache R."/>
            <person name="Mueller M."/>
            <person name="Kreis M."/>
            <person name="Delseny M."/>
            <person name="Puigdomenech P."/>
            <person name="Watson M."/>
            <person name="Schmidtheini T."/>
            <person name="Reichert B."/>
            <person name="Portetelle D."/>
            <person name="Perez-Alonso M."/>
            <person name="Boutry M."/>
            <person name="Bancroft I."/>
            <person name="Vos P."/>
            <person name="Hoheisel J."/>
            <person name="Zimmermann W."/>
            <person name="Wedler H."/>
            <person name="Ridley P."/>
            <person name="Langham S.-A."/>
            <person name="McCullagh B."/>
            <person name="Bilham L."/>
            <person name="Robben J."/>
            <person name="van der Schueren J."/>
            <person name="Grymonprez B."/>
            <person name="Chuang Y.-J."/>
            <person name="Vandenbussche F."/>
            <person name="Braeken M."/>
            <person name="Weltjens I."/>
            <person name="Voet M."/>
            <person name="Bastiaens I."/>
            <person name="Aert R."/>
            <person name="Defoor E."/>
            <person name="Weitzenegger T."/>
            <person name="Bothe G."/>
            <person name="Ramsperger U."/>
            <person name="Hilbert H."/>
            <person name="Braun M."/>
            <person name="Holzer E."/>
            <person name="Brandt A."/>
            <person name="Peters S."/>
            <person name="van Staveren M."/>
            <person name="Dirkse W."/>
            <person name="Mooijman P."/>
            <person name="Klein Lankhorst R."/>
            <person name="Rose M."/>
            <person name="Hauf J."/>
            <person name="Koetter P."/>
            <person name="Berneiser S."/>
            <person name="Hempel S."/>
            <person name="Feldpausch M."/>
            <person name="Lamberth S."/>
            <person name="Van den Daele H."/>
            <person name="De Keyser A."/>
            <person name="Buysshaert C."/>
            <person name="Gielen J."/>
            <person name="Villarroel R."/>
            <person name="De Clercq R."/>
            <person name="van Montagu M."/>
            <person name="Rogers J."/>
            <person name="Cronin A."/>
            <person name="Quail M.A."/>
            <person name="Bray-Allen S."/>
            <person name="Clark L."/>
            <person name="Doggett J."/>
            <person name="Hall S."/>
            <person name="Kay M."/>
            <person name="Lennard N."/>
            <person name="McLay K."/>
            <person name="Mayes R."/>
            <person name="Pettett A."/>
            <person name="Rajandream M.A."/>
            <person name="Lyne M."/>
            <person name="Benes V."/>
            <person name="Rechmann S."/>
            <person name="Borkova D."/>
            <person name="Bloecker H."/>
            <person name="Scharfe M."/>
            <person name="Grimm M."/>
            <person name="Loehnert T.-H."/>
            <person name="Dose S."/>
            <person name="de Haan M."/>
            <person name="Maarse A.C."/>
            <person name="Schaefer M."/>
            <person name="Mueller-Auer S."/>
            <person name="Gabel C."/>
            <person name="Fuchs M."/>
            <person name="Fartmann B."/>
            <person name="Granderath K."/>
            <person name="Dauner D."/>
            <person name="Herzl A."/>
            <person name="Neumann S."/>
            <person name="Argiriou A."/>
            <person name="Vitale D."/>
            <person name="Liguori R."/>
            <person name="Piravandi E."/>
            <person name="Massenet O."/>
            <person name="Quigley F."/>
            <person name="Clabauld G."/>
            <person name="Muendlein A."/>
            <person name="Felber R."/>
            <person name="Schnabl S."/>
            <person name="Hiller R."/>
            <person name="Schmidt W."/>
            <person name="Lecharny A."/>
            <person name="Aubourg S."/>
            <person name="Chefdor F."/>
            <person name="Cooke R."/>
            <person name="Berger C."/>
            <person name="Monfort A."/>
            <person name="Casacuberta E."/>
            <person name="Gibbons T."/>
            <person name="Weber N."/>
            <person name="Vandenbol M."/>
            <person name="Bargues M."/>
            <person name="Terol J."/>
            <person name="Torres A."/>
            <person name="Perez-Perez A."/>
            <person name="Purnelle B."/>
            <person name="Bent E."/>
            <person name="Johnson S."/>
            <person name="Tacon D."/>
            <person name="Jesse T."/>
            <person name="Heijnen L."/>
            <person name="Schwarz S."/>
            <person name="Scholler P."/>
            <person name="Heber S."/>
            <person name="Francs P."/>
            <person name="Bielke C."/>
            <person name="Frishman D."/>
            <person name="Haase D."/>
            <person name="Lemcke K."/>
            <person name="Mewes H.-W."/>
            <person name="Stocker S."/>
            <person name="Zaccaria P."/>
            <person name="Bevan M."/>
            <person name="Wilson R.K."/>
            <person name="de la Bastide M."/>
            <person name="Habermann K."/>
            <person name="Parnell L."/>
            <person name="Dedhia N."/>
            <person name="Gnoj L."/>
            <person name="Schutz K."/>
            <person name="Huang E."/>
            <person name="Spiegel L."/>
            <person name="Sekhon M."/>
            <person name="Murray J."/>
            <person name="Sheet P."/>
            <person name="Cordes M."/>
            <person name="Abu-Threideh J."/>
            <person name="Stoneking T."/>
            <person name="Kalicki J."/>
            <person name="Graves T."/>
            <person name="Harmon G."/>
            <person name="Edwards J."/>
            <person name="Latreille P."/>
            <person name="Courtney L."/>
            <person name="Cloud J."/>
            <person name="Abbott A."/>
            <person name="Scott K."/>
            <person name="Johnson D."/>
            <person name="Minx P."/>
            <person name="Bentley D."/>
            <person name="Fulton B."/>
            <person name="Miller N."/>
            <person name="Greco T."/>
            <person name="Kemp K."/>
            <person name="Kramer J."/>
            <person name="Fulton L."/>
            <person name="Mardis E."/>
            <person name="Dante M."/>
            <person name="Pepin K."/>
            <person name="Hillier L.W."/>
            <person name="Nelson J."/>
            <person name="Spieth J."/>
            <person name="Ryan E."/>
            <person name="Andrews S."/>
            <person name="Geisel C."/>
            <person name="Layman D."/>
            <person name="Du H."/>
            <person name="Ali J."/>
            <person name="Berghoff A."/>
            <person name="Jones K."/>
            <person name="Drone K."/>
            <person name="Cotton M."/>
            <person name="Joshu C."/>
            <person name="Antonoiu B."/>
            <person name="Zidanic M."/>
            <person name="Strong C."/>
            <person name="Sun H."/>
            <person name="Lamar B."/>
            <person name="Yordan C."/>
            <person name="Ma P."/>
            <person name="Zhong J."/>
            <person name="Preston R."/>
            <person name="Vil D."/>
            <person name="Shekher M."/>
            <person name="Matero A."/>
            <person name="Shah R."/>
            <person name="Swaby I.K."/>
            <person name="O'Shaughnessy A."/>
            <person name="Rodriguez M."/>
            <person name="Hoffman J."/>
            <person name="Till S."/>
            <person name="Granat S."/>
            <person name="Shohdy N."/>
            <person name="Hasegawa A."/>
            <person name="Hameed A."/>
            <person name="Lodhi M."/>
            <person name="Johnson A."/>
            <person name="Chen E."/>
            <person name="Marra M.A."/>
            <person name="Martienssen R."/>
            <person name="McCombie W.R."/>
        </authorList>
    </citation>
    <scope>NUCLEOTIDE SEQUENCE [LARGE SCALE GENOMIC DNA]</scope>
    <source>
        <strain>cv. Columbia</strain>
    </source>
</reference>
<reference key="3">
    <citation type="journal article" date="2017" name="Plant J.">
        <title>Araport11: a complete reannotation of the Arabidopsis thaliana reference genome.</title>
        <authorList>
            <person name="Cheng C.Y."/>
            <person name="Krishnakumar V."/>
            <person name="Chan A.P."/>
            <person name="Thibaud-Nissen F."/>
            <person name="Schobel S."/>
            <person name="Town C.D."/>
        </authorList>
    </citation>
    <scope>GENOME REANNOTATION</scope>
    <source>
        <strain>cv. Columbia</strain>
    </source>
</reference>
<reference key="4">
    <citation type="submission" date="2004-07" db="EMBL/GenBank/DDBJ databases">
        <title>Arabidopsis ORF clones.</title>
        <authorList>
            <person name="Cheuk R."/>
            <person name="Chen H."/>
            <person name="Kim C.J."/>
            <person name="Shinn P."/>
            <person name="Ecker J.R."/>
        </authorList>
    </citation>
    <scope>NUCLEOTIDE SEQUENCE [LARGE SCALE MRNA]</scope>
</reference>
<reference key="5">
    <citation type="submission" date="2004-09" db="EMBL/GenBank/DDBJ databases">
        <title>Large-scale analysis of RIKEN Arabidopsis full-length (RAFL) cDNAs.</title>
        <authorList>
            <person name="Totoki Y."/>
            <person name="Seki M."/>
            <person name="Ishida J."/>
            <person name="Nakajima M."/>
            <person name="Enju A."/>
            <person name="Kamiya A."/>
            <person name="Narusaka M."/>
            <person name="Shin-i T."/>
            <person name="Nakagawa M."/>
            <person name="Sakamoto N."/>
            <person name="Oishi K."/>
            <person name="Kohara Y."/>
            <person name="Kobayashi M."/>
            <person name="Toyoda A."/>
            <person name="Sakaki Y."/>
            <person name="Sakurai T."/>
            <person name="Iida K."/>
            <person name="Akiyama K."/>
            <person name="Satou M."/>
            <person name="Toyoda T."/>
            <person name="Konagaya A."/>
            <person name="Carninci P."/>
            <person name="Kawai J."/>
            <person name="Hayashizaki Y."/>
            <person name="Shinozaki K."/>
        </authorList>
    </citation>
    <scope>NUCLEOTIDE SEQUENCE [LARGE SCALE MRNA]</scope>
    <source>
        <strain>cv. Columbia</strain>
    </source>
</reference>
<reference key="6">
    <citation type="journal article" date="2009" name="Genes Dev.">
        <title>NRPD4, a protein related to the RPB4 subunit of RNA polymerase II, is a component of RNA polymerases IV and V and is required for RNA-directed DNA methylation.</title>
        <authorList>
            <person name="He X.-J."/>
            <person name="Hsu Y.-F."/>
            <person name="Pontes O."/>
            <person name="Zhu J."/>
            <person name="Lu J."/>
            <person name="Bressan R.A."/>
            <person name="Pikaard C."/>
            <person name="Wang C.-S."/>
            <person name="Zhu J.-K."/>
        </authorList>
    </citation>
    <scope>FUNCTION</scope>
    <scope>DISRUPTION PHENOTYPE</scope>
    <scope>INTERACTION WITH NRPD1 AND NRPE1</scope>
    <scope>TISSUE SPECIFICITY</scope>
    <scope>SUBCELLULAR LOCATION</scope>
</reference>
<reference key="7">
    <citation type="journal article" date="2009" name="Mol. Cell">
        <title>Subunit compositions of the RNA-silencing enzymes Pol IV and Pol V reveal their origins as specialized forms of RNA polymerase II.</title>
        <authorList>
            <person name="Ream T.S."/>
            <person name="Haag J.R."/>
            <person name="Wierzbicki A.T."/>
            <person name="Nicora C.D."/>
            <person name="Norbeck A.D."/>
            <person name="Zhu J.K."/>
            <person name="Hagen G."/>
            <person name="Guilfoyle T.J."/>
            <person name="Pasa-Tolic L."/>
            <person name="Pikaard C.S."/>
        </authorList>
    </citation>
    <scope>FUNCTION</scope>
    <scope>IDENTIFICATION BY MASS SPECTROMETRY</scope>
    <scope>SUBUNIT</scope>
    <scope>NOMENCLATURE</scope>
</reference>
<reference key="8">
    <citation type="journal article" date="2011" name="PLoS Genet.">
        <title>SHH1, a homeodomain protein required for DNA methylation, as well as RDR2, RDM4, and chromatin remodeling factors, associate with RNA polymerase IV.</title>
        <authorList>
            <person name="Law J.A."/>
            <person name="Vashisht A.A."/>
            <person name="Wohlschlegel J.A."/>
            <person name="Jacobsen S.E."/>
        </authorList>
    </citation>
    <scope>IDENTIFICATION BY MASS SPECTROMETRY</scope>
    <scope>INTERACTION WITH NRPD1</scope>
    <scope>SUBUNIT</scope>
</reference>
<gene>
    <name type="primary">NRPD4</name>
    <name type="synonym">NRPE4</name>
    <name type="synonym">RDM2</name>
    <name type="ordered locus">At4g15950</name>
    <name type="ORF">dl4012w</name>
</gene>
<organism>
    <name type="scientific">Arabidopsis thaliana</name>
    <name type="common">Mouse-ear cress</name>
    <dbReference type="NCBI Taxonomy" id="3702"/>
    <lineage>
        <taxon>Eukaryota</taxon>
        <taxon>Viridiplantae</taxon>
        <taxon>Streptophyta</taxon>
        <taxon>Embryophyta</taxon>
        <taxon>Tracheophyta</taxon>
        <taxon>Spermatophyta</taxon>
        <taxon>Magnoliopsida</taxon>
        <taxon>eudicotyledons</taxon>
        <taxon>Gunneridae</taxon>
        <taxon>Pentapetalae</taxon>
        <taxon>rosids</taxon>
        <taxon>malvids</taxon>
        <taxon>Brassicales</taxon>
        <taxon>Brassicaceae</taxon>
        <taxon>Camelineae</taxon>
        <taxon>Arabidopsis</taxon>
    </lineage>
</organism>
<proteinExistence type="evidence at protein level"/>
<dbReference type="EMBL" id="Z97340">
    <property type="protein sequence ID" value="CAB46033.1"/>
    <property type="status" value="ALT_SEQ"/>
    <property type="molecule type" value="Genomic_DNA"/>
</dbReference>
<dbReference type="EMBL" id="AL161542">
    <property type="protein sequence ID" value="CAB78637.1"/>
    <property type="status" value="ALT_SEQ"/>
    <property type="molecule type" value="Genomic_DNA"/>
</dbReference>
<dbReference type="EMBL" id="CP002687">
    <property type="status" value="NOT_ANNOTATED_CDS"/>
    <property type="molecule type" value="Genomic_DNA"/>
</dbReference>
<dbReference type="EMBL" id="BT015117">
    <property type="protein sequence ID" value="AAT71989.1"/>
    <property type="molecule type" value="mRNA"/>
</dbReference>
<dbReference type="EMBL" id="AK176726">
    <property type="protein sequence ID" value="BAD44489.1"/>
    <property type="molecule type" value="mRNA"/>
</dbReference>
<dbReference type="PIR" id="G85176">
    <property type="entry name" value="G85176"/>
</dbReference>
<dbReference type="PDB" id="8HYJ">
    <property type="method" value="EM"/>
    <property type="resolution" value="4.30 A"/>
    <property type="chains" value="D=1-205"/>
</dbReference>
<dbReference type="PDB" id="8XMB">
    <property type="method" value="EM"/>
    <property type="resolution" value="3.40 A"/>
    <property type="chains" value="D=1-205"/>
</dbReference>
<dbReference type="PDB" id="8XMC">
    <property type="method" value="EM"/>
    <property type="resolution" value="3.10 A"/>
    <property type="chains" value="D=1-205"/>
</dbReference>
<dbReference type="PDB" id="8XMD">
    <property type="method" value="EM"/>
    <property type="resolution" value="3.40 A"/>
    <property type="chains" value="D=1-205"/>
</dbReference>
<dbReference type="PDB" id="8XME">
    <property type="method" value="EM"/>
    <property type="resolution" value="3.10 A"/>
    <property type="chains" value="D=1-205"/>
</dbReference>
<dbReference type="PDBsum" id="8HYJ"/>
<dbReference type="PDBsum" id="8XMB"/>
<dbReference type="PDBsum" id="8XMC"/>
<dbReference type="PDBsum" id="8XMD"/>
<dbReference type="PDBsum" id="8XME"/>
<dbReference type="EMDB" id="EMD-35086"/>
<dbReference type="EMDB" id="EMD-38470"/>
<dbReference type="EMDB" id="EMD-38471"/>
<dbReference type="EMDB" id="EMD-38472"/>
<dbReference type="EMDB" id="EMD-38473"/>
<dbReference type="SMR" id="Q6DBA5"/>
<dbReference type="BioGRID" id="12571">
    <property type="interactions" value="2"/>
</dbReference>
<dbReference type="STRING" id="3702.Q6DBA5"/>
<dbReference type="PaxDb" id="3702-AT4G15950.1"/>
<dbReference type="ProteomicsDB" id="250571"/>
<dbReference type="Araport" id="AT4G15950"/>
<dbReference type="TAIR" id="AT4G15950"/>
<dbReference type="eggNOG" id="KOG1535">
    <property type="taxonomic scope" value="Eukaryota"/>
</dbReference>
<dbReference type="HOGENOM" id="CLU_1334872_0_0_1"/>
<dbReference type="InParanoid" id="Q6DBA5"/>
<dbReference type="PRO" id="PR:Q6DBA5"/>
<dbReference type="Proteomes" id="UP000006548">
    <property type="component" value="Chromosome 4"/>
</dbReference>
<dbReference type="ExpressionAtlas" id="Q6DBA5">
    <property type="expression patterns" value="baseline and differential"/>
</dbReference>
<dbReference type="GO" id="GO:0005634">
    <property type="term" value="C:nucleus"/>
    <property type="evidence" value="ECO:0000314"/>
    <property type="project" value="TAIR"/>
</dbReference>
<dbReference type="GO" id="GO:0000418">
    <property type="term" value="C:RNA polymerase IV complex"/>
    <property type="evidence" value="ECO:0000314"/>
    <property type="project" value="UniProtKB"/>
</dbReference>
<dbReference type="GO" id="GO:0000419">
    <property type="term" value="C:RNA polymerase V complex"/>
    <property type="evidence" value="ECO:0000314"/>
    <property type="project" value="UniProtKB"/>
</dbReference>
<dbReference type="GO" id="GO:0000166">
    <property type="term" value="F:nucleotide binding"/>
    <property type="evidence" value="ECO:0007669"/>
    <property type="project" value="InterPro"/>
</dbReference>
<dbReference type="GO" id="GO:0006352">
    <property type="term" value="P:DNA-templated transcription initiation"/>
    <property type="evidence" value="ECO:0007669"/>
    <property type="project" value="InterPro"/>
</dbReference>
<dbReference type="GO" id="GO:0035194">
    <property type="term" value="P:regulatory ncRNA-mediated post-transcriptional gene silencing"/>
    <property type="evidence" value="ECO:0000315"/>
    <property type="project" value="TAIR"/>
</dbReference>
<dbReference type="FunFam" id="1.20.1250.40:FF:000024">
    <property type="entry name" value="DNA-directed RNA polymerases IV and V subunit 4"/>
    <property type="match status" value="1"/>
</dbReference>
<dbReference type="Gene3D" id="1.20.1250.40">
    <property type="match status" value="1"/>
</dbReference>
<dbReference type="InterPro" id="IPR010997">
    <property type="entry name" value="HRDC-like_sf"/>
</dbReference>
<dbReference type="InterPro" id="IPR006590">
    <property type="entry name" value="RNA_pol_Rpb4/RPC9_core"/>
</dbReference>
<dbReference type="InterPro" id="IPR045222">
    <property type="entry name" value="Rpb4-like"/>
</dbReference>
<dbReference type="InterPro" id="IPR005574">
    <property type="entry name" value="Rpb4/RPC9"/>
</dbReference>
<dbReference type="InterPro" id="IPR038324">
    <property type="entry name" value="Rpb4/RPC9_sf"/>
</dbReference>
<dbReference type="PANTHER" id="PTHR21297">
    <property type="entry name" value="DNA-DIRECTED RNA POLYMERASE II"/>
    <property type="match status" value="1"/>
</dbReference>
<dbReference type="Pfam" id="PF03874">
    <property type="entry name" value="RNA_pol_Rpb4"/>
    <property type="match status" value="1"/>
</dbReference>
<dbReference type="SMART" id="SM00657">
    <property type="entry name" value="RPOL4c"/>
    <property type="match status" value="1"/>
</dbReference>
<dbReference type="SUPFAM" id="SSF47819">
    <property type="entry name" value="HRDC-like"/>
    <property type="match status" value="1"/>
</dbReference>
<feature type="chain" id="PRO_0000423332" description="DNA-directed RNA polymerases IV and V subunit 4">
    <location>
        <begin position="1"/>
        <end position="205"/>
    </location>
</feature>
<feature type="region of interest" description="Disordered" evidence="1">
    <location>
        <begin position="1"/>
        <end position="79"/>
    </location>
</feature>
<feature type="compositionally biased region" description="Polar residues" evidence="1">
    <location>
        <begin position="48"/>
        <end position="60"/>
    </location>
</feature>
<feature type="sequence conflict" description="In Ref. 4; AAT71989 and 5; BAD44489." evidence="5" ref="4 5">
    <original>R</original>
    <variation>G</variation>
    <location>
        <position position="38"/>
    </location>
</feature>
<feature type="helix" evidence="6">
    <location>
        <begin position="95"/>
        <end position="108"/>
    </location>
</feature>
<feature type="strand" evidence="6">
    <location>
        <begin position="109"/>
        <end position="111"/>
    </location>
</feature>
<feature type="helix" evidence="6">
    <location>
        <begin position="121"/>
        <end position="127"/>
    </location>
</feature>
<feature type="turn" evidence="6">
    <location>
        <begin position="128"/>
        <end position="131"/>
    </location>
</feature>
<feature type="helix" evidence="6">
    <location>
        <begin position="139"/>
        <end position="151"/>
    </location>
</feature>
<feature type="helix" evidence="6">
    <location>
        <begin position="156"/>
        <end position="165"/>
    </location>
</feature>
<feature type="strand" evidence="6">
    <location>
        <begin position="168"/>
        <end position="170"/>
    </location>
</feature>
<feature type="helix" evidence="6">
    <location>
        <begin position="173"/>
        <end position="176"/>
    </location>
</feature>
<feature type="helix" evidence="6">
    <location>
        <begin position="178"/>
        <end position="180"/>
    </location>
</feature>
<feature type="helix" evidence="6">
    <location>
        <begin position="188"/>
        <end position="201"/>
    </location>
</feature>
<keyword id="KW-0002">3D-structure</keyword>
<keyword id="KW-0539">Nucleus</keyword>
<keyword id="KW-1185">Reference proteome</keyword>
<protein>
    <recommendedName>
        <fullName>DNA-directed RNA polymerases IV and V subunit 4</fullName>
    </recommendedName>
    <alternativeName>
        <fullName>Protein RNA-DIRECTED DNA METHYLATION 2</fullName>
    </alternativeName>
    <alternativeName>
        <fullName>RNA polymerase II, Rpb4, core protein</fullName>
    </alternativeName>
</protein>
<evidence type="ECO:0000256" key="1">
    <source>
        <dbReference type="SAM" id="MobiDB-lite"/>
    </source>
</evidence>
<evidence type="ECO:0000269" key="2">
    <source>
    </source>
</evidence>
<evidence type="ECO:0000269" key="3">
    <source>
    </source>
</evidence>
<evidence type="ECO:0000269" key="4">
    <source>
    </source>
</evidence>
<evidence type="ECO:0000305" key="5"/>
<evidence type="ECO:0007829" key="6">
    <source>
        <dbReference type="PDB" id="8XMD"/>
    </source>
</evidence>